<sequence>MSVLTVHTSSKVYNVTVKSGVLSQIGSYIAPLRPSAILIVTDDQVADLYLDTVKSSLHNLAPLHAVVLPNGEETKSFDNYYALQTAALEYGLDRKSMIIALGGGVIGDLAGFVAATYMRGIAYVQVPTTLLAHDSSVGGKVAINHPLGKNMIGAFHQPEAVLYDPQVFATLPEREWRSGFAEVVKHGLIKDAAFYAWLQKYINDFSRIQGEIAEELLLRSIQVKANIVAADEKEKGERALLNLGHTLGHAIEAELGYGKITHGEAVVIGIIFAMKLSEKVYHQSLPIQDLEKWLKFLGYETRIPKGLDTGALIGTMKKDKKVERGVIRFVLLEEVGHAVIKEVDEQLIRELLNVEIEEETT</sequence>
<feature type="chain" id="PRO_0000140709" description="3-dehydroquinate synthase">
    <location>
        <begin position="1"/>
        <end position="361"/>
    </location>
</feature>
<feature type="binding site" evidence="1">
    <location>
        <begin position="104"/>
        <end position="108"/>
    </location>
    <ligand>
        <name>NAD(+)</name>
        <dbReference type="ChEBI" id="CHEBI:57540"/>
    </ligand>
</feature>
<feature type="binding site" evidence="1">
    <location>
        <begin position="128"/>
        <end position="129"/>
    </location>
    <ligand>
        <name>NAD(+)</name>
        <dbReference type="ChEBI" id="CHEBI:57540"/>
    </ligand>
</feature>
<feature type="binding site" evidence="1">
    <location>
        <position position="140"/>
    </location>
    <ligand>
        <name>NAD(+)</name>
        <dbReference type="ChEBI" id="CHEBI:57540"/>
    </ligand>
</feature>
<feature type="binding site" evidence="1">
    <location>
        <position position="149"/>
    </location>
    <ligand>
        <name>NAD(+)</name>
        <dbReference type="ChEBI" id="CHEBI:57540"/>
    </ligand>
</feature>
<feature type="binding site" evidence="1">
    <location>
        <position position="182"/>
    </location>
    <ligand>
        <name>Zn(2+)</name>
        <dbReference type="ChEBI" id="CHEBI:29105"/>
    </ligand>
</feature>
<feature type="binding site" evidence="1">
    <location>
        <position position="245"/>
    </location>
    <ligand>
        <name>Zn(2+)</name>
        <dbReference type="ChEBI" id="CHEBI:29105"/>
    </ligand>
</feature>
<feature type="binding site" evidence="1">
    <location>
        <position position="262"/>
    </location>
    <ligand>
        <name>Zn(2+)</name>
        <dbReference type="ChEBI" id="CHEBI:29105"/>
    </ligand>
</feature>
<keyword id="KW-0028">Amino-acid biosynthesis</keyword>
<keyword id="KW-0057">Aromatic amino acid biosynthesis</keyword>
<keyword id="KW-0170">Cobalt</keyword>
<keyword id="KW-0963">Cytoplasm</keyword>
<keyword id="KW-0456">Lyase</keyword>
<keyword id="KW-0479">Metal-binding</keyword>
<keyword id="KW-0520">NAD</keyword>
<keyword id="KW-0547">Nucleotide-binding</keyword>
<keyword id="KW-1185">Reference proteome</keyword>
<keyword id="KW-0862">Zinc</keyword>
<organism>
    <name type="scientific">Halalkalibacterium halodurans (strain ATCC BAA-125 / DSM 18197 / FERM 7344 / JCM 9153 / C-125)</name>
    <name type="common">Bacillus halodurans</name>
    <dbReference type="NCBI Taxonomy" id="272558"/>
    <lineage>
        <taxon>Bacteria</taxon>
        <taxon>Bacillati</taxon>
        <taxon>Bacillota</taxon>
        <taxon>Bacilli</taxon>
        <taxon>Bacillales</taxon>
        <taxon>Bacillaceae</taxon>
        <taxon>Halalkalibacterium (ex Joshi et al. 2022)</taxon>
    </lineage>
</organism>
<evidence type="ECO:0000255" key="1">
    <source>
        <dbReference type="HAMAP-Rule" id="MF_00110"/>
    </source>
</evidence>
<evidence type="ECO:0000305" key="2"/>
<protein>
    <recommendedName>
        <fullName evidence="1">3-dehydroquinate synthase</fullName>
        <shortName evidence="1">DHQS</shortName>
        <ecNumber evidence="1">4.2.3.4</ecNumber>
    </recommendedName>
</protein>
<gene>
    <name evidence="1" type="primary">aroB</name>
    <name type="ordered locus">BH1657</name>
</gene>
<name>AROB_HALH5</name>
<accession>Q9KCB6</accession>
<dbReference type="EC" id="4.2.3.4" evidence="1"/>
<dbReference type="EMBL" id="BA000004">
    <property type="protein sequence ID" value="BAB05376.1"/>
    <property type="status" value="ALT_INIT"/>
    <property type="molecule type" value="Genomic_DNA"/>
</dbReference>
<dbReference type="PIR" id="A83857">
    <property type="entry name" value="A83857"/>
</dbReference>
<dbReference type="RefSeq" id="WP_041820481.1">
    <property type="nucleotide sequence ID" value="NC_002570.2"/>
</dbReference>
<dbReference type="SMR" id="Q9KCB6"/>
<dbReference type="STRING" id="272558.gene:10727555"/>
<dbReference type="KEGG" id="bha:BH1657"/>
<dbReference type="eggNOG" id="COG0337">
    <property type="taxonomic scope" value="Bacteria"/>
</dbReference>
<dbReference type="HOGENOM" id="CLU_001201_0_2_9"/>
<dbReference type="OrthoDB" id="9806583at2"/>
<dbReference type="UniPathway" id="UPA00053">
    <property type="reaction ID" value="UER00085"/>
</dbReference>
<dbReference type="Proteomes" id="UP000001258">
    <property type="component" value="Chromosome"/>
</dbReference>
<dbReference type="GO" id="GO:0005737">
    <property type="term" value="C:cytoplasm"/>
    <property type="evidence" value="ECO:0007669"/>
    <property type="project" value="UniProtKB-SubCell"/>
</dbReference>
<dbReference type="GO" id="GO:0003856">
    <property type="term" value="F:3-dehydroquinate synthase activity"/>
    <property type="evidence" value="ECO:0007669"/>
    <property type="project" value="UniProtKB-UniRule"/>
</dbReference>
<dbReference type="GO" id="GO:0046872">
    <property type="term" value="F:metal ion binding"/>
    <property type="evidence" value="ECO:0007669"/>
    <property type="project" value="UniProtKB-KW"/>
</dbReference>
<dbReference type="GO" id="GO:0000166">
    <property type="term" value="F:nucleotide binding"/>
    <property type="evidence" value="ECO:0007669"/>
    <property type="project" value="UniProtKB-KW"/>
</dbReference>
<dbReference type="GO" id="GO:0008652">
    <property type="term" value="P:amino acid biosynthetic process"/>
    <property type="evidence" value="ECO:0007669"/>
    <property type="project" value="UniProtKB-KW"/>
</dbReference>
<dbReference type="GO" id="GO:0009073">
    <property type="term" value="P:aromatic amino acid family biosynthetic process"/>
    <property type="evidence" value="ECO:0007669"/>
    <property type="project" value="UniProtKB-KW"/>
</dbReference>
<dbReference type="GO" id="GO:0009423">
    <property type="term" value="P:chorismate biosynthetic process"/>
    <property type="evidence" value="ECO:0007669"/>
    <property type="project" value="UniProtKB-UniRule"/>
</dbReference>
<dbReference type="CDD" id="cd08195">
    <property type="entry name" value="DHQS"/>
    <property type="match status" value="1"/>
</dbReference>
<dbReference type="FunFam" id="3.40.50.1970:FF:000001">
    <property type="entry name" value="3-dehydroquinate synthase"/>
    <property type="match status" value="1"/>
</dbReference>
<dbReference type="Gene3D" id="3.40.50.1970">
    <property type="match status" value="1"/>
</dbReference>
<dbReference type="Gene3D" id="1.20.1090.10">
    <property type="entry name" value="Dehydroquinate synthase-like - alpha domain"/>
    <property type="match status" value="1"/>
</dbReference>
<dbReference type="HAMAP" id="MF_00110">
    <property type="entry name" value="DHQ_synthase"/>
    <property type="match status" value="1"/>
</dbReference>
<dbReference type="InterPro" id="IPR050071">
    <property type="entry name" value="Dehydroquinate_synthase"/>
</dbReference>
<dbReference type="InterPro" id="IPR016037">
    <property type="entry name" value="DHQ_synth_AroB"/>
</dbReference>
<dbReference type="InterPro" id="IPR030963">
    <property type="entry name" value="DHQ_synth_fam"/>
</dbReference>
<dbReference type="InterPro" id="IPR030960">
    <property type="entry name" value="DHQS/DOIS_N"/>
</dbReference>
<dbReference type="InterPro" id="IPR056179">
    <property type="entry name" value="DHQS_C"/>
</dbReference>
<dbReference type="NCBIfam" id="TIGR01357">
    <property type="entry name" value="aroB"/>
    <property type="match status" value="1"/>
</dbReference>
<dbReference type="PANTHER" id="PTHR43622">
    <property type="entry name" value="3-DEHYDROQUINATE SYNTHASE"/>
    <property type="match status" value="1"/>
</dbReference>
<dbReference type="PANTHER" id="PTHR43622:SF7">
    <property type="entry name" value="3-DEHYDROQUINATE SYNTHASE, CHLOROPLASTIC"/>
    <property type="match status" value="1"/>
</dbReference>
<dbReference type="Pfam" id="PF01761">
    <property type="entry name" value="DHQ_synthase"/>
    <property type="match status" value="1"/>
</dbReference>
<dbReference type="Pfam" id="PF24621">
    <property type="entry name" value="DHQS_C"/>
    <property type="match status" value="1"/>
</dbReference>
<dbReference type="PIRSF" id="PIRSF001455">
    <property type="entry name" value="DHQ_synth"/>
    <property type="match status" value="1"/>
</dbReference>
<dbReference type="SUPFAM" id="SSF56796">
    <property type="entry name" value="Dehydroquinate synthase-like"/>
    <property type="match status" value="1"/>
</dbReference>
<proteinExistence type="inferred from homology"/>
<reference key="1">
    <citation type="journal article" date="2000" name="Nucleic Acids Res.">
        <title>Complete genome sequence of the alkaliphilic bacterium Bacillus halodurans and genomic sequence comparison with Bacillus subtilis.</title>
        <authorList>
            <person name="Takami H."/>
            <person name="Nakasone K."/>
            <person name="Takaki Y."/>
            <person name="Maeno G."/>
            <person name="Sasaki R."/>
            <person name="Masui N."/>
            <person name="Fuji F."/>
            <person name="Hirama C."/>
            <person name="Nakamura Y."/>
            <person name="Ogasawara N."/>
            <person name="Kuhara S."/>
            <person name="Horikoshi K."/>
        </authorList>
    </citation>
    <scope>NUCLEOTIDE SEQUENCE [LARGE SCALE GENOMIC DNA]</scope>
    <source>
        <strain>ATCC BAA-125 / DSM 18197 / FERM 7344 / JCM 9153 / C-125</strain>
    </source>
</reference>
<comment type="function">
    <text evidence="1">Catalyzes the conversion of 3-deoxy-D-arabino-heptulosonate 7-phosphate (DAHP) to dehydroquinate (DHQ).</text>
</comment>
<comment type="catalytic activity">
    <reaction evidence="1">
        <text>7-phospho-2-dehydro-3-deoxy-D-arabino-heptonate = 3-dehydroquinate + phosphate</text>
        <dbReference type="Rhea" id="RHEA:21968"/>
        <dbReference type="ChEBI" id="CHEBI:32364"/>
        <dbReference type="ChEBI" id="CHEBI:43474"/>
        <dbReference type="ChEBI" id="CHEBI:58394"/>
        <dbReference type="EC" id="4.2.3.4"/>
    </reaction>
</comment>
<comment type="cofactor">
    <cofactor evidence="1">
        <name>NAD(+)</name>
        <dbReference type="ChEBI" id="CHEBI:57540"/>
    </cofactor>
</comment>
<comment type="cofactor">
    <cofactor evidence="1">
        <name>Co(2+)</name>
        <dbReference type="ChEBI" id="CHEBI:48828"/>
    </cofactor>
    <cofactor evidence="1">
        <name>Zn(2+)</name>
        <dbReference type="ChEBI" id="CHEBI:29105"/>
    </cofactor>
    <text evidence="1">Binds 1 divalent metal cation per subunit. Can use either Co(2+) or Zn(2+).</text>
</comment>
<comment type="pathway">
    <text evidence="1">Metabolic intermediate biosynthesis; chorismate biosynthesis; chorismate from D-erythrose 4-phosphate and phosphoenolpyruvate: step 2/7.</text>
</comment>
<comment type="subcellular location">
    <subcellularLocation>
        <location evidence="1">Cytoplasm</location>
    </subcellularLocation>
</comment>
<comment type="similarity">
    <text evidence="1">Belongs to the sugar phosphate cyclases superfamily. Dehydroquinate synthase family.</text>
</comment>
<comment type="sequence caution" evidence="2">
    <conflict type="erroneous initiation">
        <sequence resource="EMBL-CDS" id="BAB05376"/>
    </conflict>
</comment>